<accession>Q83FL1</accession>
<keyword id="KW-1185">Reference proteome</keyword>
<keyword id="KW-0687">Ribonucleoprotein</keyword>
<keyword id="KW-0689">Ribosomal protein</keyword>
<dbReference type="EMBL" id="AE014184">
    <property type="protein sequence ID" value="AAO44808.1"/>
    <property type="molecule type" value="Genomic_DNA"/>
</dbReference>
<dbReference type="SMR" id="Q83FL1"/>
<dbReference type="STRING" id="203267.TWT_711"/>
<dbReference type="KEGG" id="twh:TWT_711"/>
<dbReference type="eggNOG" id="COG0222">
    <property type="taxonomic scope" value="Bacteria"/>
</dbReference>
<dbReference type="HOGENOM" id="CLU_086499_3_0_11"/>
<dbReference type="Proteomes" id="UP000002200">
    <property type="component" value="Chromosome"/>
</dbReference>
<dbReference type="GO" id="GO:0022625">
    <property type="term" value="C:cytosolic large ribosomal subunit"/>
    <property type="evidence" value="ECO:0007669"/>
    <property type="project" value="TreeGrafter"/>
</dbReference>
<dbReference type="GO" id="GO:0003729">
    <property type="term" value="F:mRNA binding"/>
    <property type="evidence" value="ECO:0007669"/>
    <property type="project" value="TreeGrafter"/>
</dbReference>
<dbReference type="GO" id="GO:0003735">
    <property type="term" value="F:structural constituent of ribosome"/>
    <property type="evidence" value="ECO:0007669"/>
    <property type="project" value="InterPro"/>
</dbReference>
<dbReference type="GO" id="GO:0006412">
    <property type="term" value="P:translation"/>
    <property type="evidence" value="ECO:0007669"/>
    <property type="project" value="UniProtKB-UniRule"/>
</dbReference>
<dbReference type="CDD" id="cd00387">
    <property type="entry name" value="Ribosomal_L7_L12"/>
    <property type="match status" value="1"/>
</dbReference>
<dbReference type="FunFam" id="3.30.1390.10:FF:000001">
    <property type="entry name" value="50S ribosomal protein L7/L12"/>
    <property type="match status" value="1"/>
</dbReference>
<dbReference type="Gene3D" id="3.30.1390.10">
    <property type="match status" value="1"/>
</dbReference>
<dbReference type="Gene3D" id="1.20.5.710">
    <property type="entry name" value="Single helix bin"/>
    <property type="match status" value="1"/>
</dbReference>
<dbReference type="HAMAP" id="MF_00368">
    <property type="entry name" value="Ribosomal_bL12"/>
    <property type="match status" value="1"/>
</dbReference>
<dbReference type="InterPro" id="IPR000206">
    <property type="entry name" value="Ribosomal_bL12"/>
</dbReference>
<dbReference type="InterPro" id="IPR013823">
    <property type="entry name" value="Ribosomal_bL12_C"/>
</dbReference>
<dbReference type="InterPro" id="IPR014719">
    <property type="entry name" value="Ribosomal_bL12_C/ClpS-like"/>
</dbReference>
<dbReference type="InterPro" id="IPR008932">
    <property type="entry name" value="Ribosomal_bL12_oligo"/>
</dbReference>
<dbReference type="InterPro" id="IPR036235">
    <property type="entry name" value="Ribosomal_bL12_oligo_N_sf"/>
</dbReference>
<dbReference type="NCBIfam" id="TIGR00855">
    <property type="entry name" value="L12"/>
    <property type="match status" value="1"/>
</dbReference>
<dbReference type="PANTHER" id="PTHR45987">
    <property type="entry name" value="39S RIBOSOMAL PROTEIN L12"/>
    <property type="match status" value="1"/>
</dbReference>
<dbReference type="PANTHER" id="PTHR45987:SF4">
    <property type="entry name" value="LARGE RIBOSOMAL SUBUNIT PROTEIN BL12M"/>
    <property type="match status" value="1"/>
</dbReference>
<dbReference type="Pfam" id="PF00542">
    <property type="entry name" value="Ribosomal_L12"/>
    <property type="match status" value="1"/>
</dbReference>
<dbReference type="Pfam" id="PF16320">
    <property type="entry name" value="Ribosomal_L12_N"/>
    <property type="match status" value="1"/>
</dbReference>
<dbReference type="SUPFAM" id="SSF54736">
    <property type="entry name" value="ClpS-like"/>
    <property type="match status" value="1"/>
</dbReference>
<dbReference type="SUPFAM" id="SSF48300">
    <property type="entry name" value="Ribosomal protein L7/12, oligomerisation (N-terminal) domain"/>
    <property type="match status" value="1"/>
</dbReference>
<sequence length="131" mass="13602">MKEDGMAKITTDELIESFKEMTLIELSEFVSKFEEVFKVTAAAPVAAAAAPVEPAAEAAPEKTTFDVILEAAGDKKIQVIKEVRTITGLGLGEAKALVDGVPSKVLEGANKDAADAAKAQLEAAGAQVSVK</sequence>
<comment type="function">
    <text evidence="1">Forms part of the ribosomal stalk which helps the ribosome interact with GTP-bound translation factors. Is thus essential for accurate translation.</text>
</comment>
<comment type="subunit">
    <text evidence="1">Homodimer. Part of the ribosomal stalk of the 50S ribosomal subunit. Forms a multimeric L10(L12)X complex, where L10 forms an elongated spine to which 2 to 4 L12 dimers bind in a sequential fashion. Binds GTP-bound translation factors.</text>
</comment>
<comment type="similarity">
    <text evidence="1">Belongs to the bacterial ribosomal protein bL12 family.</text>
</comment>
<protein>
    <recommendedName>
        <fullName evidence="1">Large ribosomal subunit protein bL12</fullName>
    </recommendedName>
    <alternativeName>
        <fullName evidence="2">50S ribosomal protein L7/L12</fullName>
    </alternativeName>
</protein>
<organism>
    <name type="scientific">Tropheryma whipplei (strain Twist)</name>
    <name type="common">Whipple's bacillus</name>
    <dbReference type="NCBI Taxonomy" id="203267"/>
    <lineage>
        <taxon>Bacteria</taxon>
        <taxon>Bacillati</taxon>
        <taxon>Actinomycetota</taxon>
        <taxon>Actinomycetes</taxon>
        <taxon>Micrococcales</taxon>
        <taxon>Tropherymataceae</taxon>
        <taxon>Tropheryma</taxon>
    </lineage>
</organism>
<gene>
    <name evidence="1" type="primary">rplL</name>
    <name type="ordered locus">TWT_711</name>
</gene>
<reference key="1">
    <citation type="journal article" date="2003" name="Genome Res.">
        <title>Tropheryma whipplei twist: a human pathogenic Actinobacteria with a reduced genome.</title>
        <authorList>
            <person name="Raoult D."/>
            <person name="Ogata H."/>
            <person name="Audic S."/>
            <person name="Robert C."/>
            <person name="Suhre K."/>
            <person name="Drancourt M."/>
            <person name="Claverie J.-M."/>
        </authorList>
    </citation>
    <scope>NUCLEOTIDE SEQUENCE [LARGE SCALE GENOMIC DNA]</scope>
    <source>
        <strain>Twist</strain>
    </source>
</reference>
<feature type="chain" id="PRO_0000243524" description="Large ribosomal subunit protein bL12">
    <location>
        <begin position="1"/>
        <end position="131"/>
    </location>
</feature>
<name>RL7_TROWT</name>
<evidence type="ECO:0000255" key="1">
    <source>
        <dbReference type="HAMAP-Rule" id="MF_00368"/>
    </source>
</evidence>
<evidence type="ECO:0000305" key="2"/>
<proteinExistence type="inferred from homology"/>